<proteinExistence type="inferred from homology"/>
<comment type="function">
    <text evidence="1">Catalyzes the transfer of the diacylglyceryl group from phosphatidylglycerol to the sulfhydryl group of the N-terminal cysteine of a prolipoprotein, the first step in the formation of mature lipoproteins.</text>
</comment>
<comment type="catalytic activity">
    <reaction evidence="1">
        <text>L-cysteinyl-[prolipoprotein] + a 1,2-diacyl-sn-glycero-3-phospho-(1'-sn-glycerol) = an S-1,2-diacyl-sn-glyceryl-L-cysteinyl-[prolipoprotein] + sn-glycerol 1-phosphate + H(+)</text>
        <dbReference type="Rhea" id="RHEA:56712"/>
        <dbReference type="Rhea" id="RHEA-COMP:14679"/>
        <dbReference type="Rhea" id="RHEA-COMP:14680"/>
        <dbReference type="ChEBI" id="CHEBI:15378"/>
        <dbReference type="ChEBI" id="CHEBI:29950"/>
        <dbReference type="ChEBI" id="CHEBI:57685"/>
        <dbReference type="ChEBI" id="CHEBI:64716"/>
        <dbReference type="ChEBI" id="CHEBI:140658"/>
        <dbReference type="EC" id="2.5.1.145"/>
    </reaction>
</comment>
<comment type="pathway">
    <text evidence="1">Protein modification; lipoprotein biosynthesis (diacylglyceryl transfer).</text>
</comment>
<comment type="subcellular location">
    <subcellularLocation>
        <location evidence="1">Cell inner membrane</location>
        <topology evidence="1">Multi-pass membrane protein</topology>
    </subcellularLocation>
</comment>
<comment type="similarity">
    <text evidence="1">Belongs to the Lgt family.</text>
</comment>
<keyword id="KW-0997">Cell inner membrane</keyword>
<keyword id="KW-1003">Cell membrane</keyword>
<keyword id="KW-0472">Membrane</keyword>
<keyword id="KW-1185">Reference proteome</keyword>
<keyword id="KW-0808">Transferase</keyword>
<keyword id="KW-0812">Transmembrane</keyword>
<keyword id="KW-1133">Transmembrane helix</keyword>
<feature type="chain" id="PRO_0000172721" description="Phosphatidylglycerol--prolipoprotein diacylglyceryl transferase">
    <location>
        <begin position="1"/>
        <end position="301"/>
    </location>
</feature>
<feature type="transmembrane region" description="Helical" evidence="1">
    <location>
        <begin position="10"/>
        <end position="30"/>
    </location>
</feature>
<feature type="transmembrane region" description="Helical" evidence="1">
    <location>
        <begin position="57"/>
        <end position="77"/>
    </location>
</feature>
<feature type="transmembrane region" description="Helical" evidence="1">
    <location>
        <begin position="92"/>
        <end position="112"/>
    </location>
</feature>
<feature type="transmembrane region" description="Helical" evidence="1">
    <location>
        <begin position="119"/>
        <end position="139"/>
    </location>
</feature>
<feature type="transmembrane region" description="Helical" evidence="1">
    <location>
        <begin position="202"/>
        <end position="222"/>
    </location>
</feature>
<feature type="transmembrane region" description="Helical" evidence="1">
    <location>
        <begin position="230"/>
        <end position="250"/>
    </location>
</feature>
<feature type="transmembrane region" description="Helical" evidence="1">
    <location>
        <begin position="264"/>
        <end position="284"/>
    </location>
</feature>
<feature type="binding site" evidence="1">
    <location>
        <position position="140"/>
    </location>
    <ligand>
        <name>a 1,2-diacyl-sn-glycero-3-phospho-(1'-sn-glycerol)</name>
        <dbReference type="ChEBI" id="CHEBI:64716"/>
    </ligand>
</feature>
<accession>Q87BT3</accession>
<name>LGT_XYLFT</name>
<dbReference type="EC" id="2.5.1.145" evidence="1"/>
<dbReference type="EMBL" id="AE009442">
    <property type="protein sequence ID" value="AAO29212.1"/>
    <property type="molecule type" value="Genomic_DNA"/>
</dbReference>
<dbReference type="RefSeq" id="WP_004091059.1">
    <property type="nucleotide sequence ID" value="NC_004556.1"/>
</dbReference>
<dbReference type="SMR" id="Q87BT3"/>
<dbReference type="GeneID" id="93905182"/>
<dbReference type="KEGG" id="xft:PD_1365"/>
<dbReference type="HOGENOM" id="CLU_013386_1_0_6"/>
<dbReference type="UniPathway" id="UPA00664"/>
<dbReference type="Proteomes" id="UP000002516">
    <property type="component" value="Chromosome"/>
</dbReference>
<dbReference type="GO" id="GO:0005886">
    <property type="term" value="C:plasma membrane"/>
    <property type="evidence" value="ECO:0007669"/>
    <property type="project" value="UniProtKB-SubCell"/>
</dbReference>
<dbReference type="GO" id="GO:0008961">
    <property type="term" value="F:phosphatidylglycerol-prolipoprotein diacylglyceryl transferase activity"/>
    <property type="evidence" value="ECO:0007669"/>
    <property type="project" value="UniProtKB-UniRule"/>
</dbReference>
<dbReference type="GO" id="GO:0042158">
    <property type="term" value="P:lipoprotein biosynthetic process"/>
    <property type="evidence" value="ECO:0007669"/>
    <property type="project" value="UniProtKB-UniRule"/>
</dbReference>
<dbReference type="HAMAP" id="MF_01147">
    <property type="entry name" value="Lgt"/>
    <property type="match status" value="1"/>
</dbReference>
<dbReference type="InterPro" id="IPR001640">
    <property type="entry name" value="Lgt"/>
</dbReference>
<dbReference type="NCBIfam" id="TIGR00544">
    <property type="entry name" value="lgt"/>
    <property type="match status" value="1"/>
</dbReference>
<dbReference type="PANTHER" id="PTHR30589:SF0">
    <property type="entry name" value="PHOSPHATIDYLGLYCEROL--PROLIPOPROTEIN DIACYLGLYCERYL TRANSFERASE"/>
    <property type="match status" value="1"/>
</dbReference>
<dbReference type="PANTHER" id="PTHR30589">
    <property type="entry name" value="PROLIPOPROTEIN DIACYLGLYCERYL TRANSFERASE"/>
    <property type="match status" value="1"/>
</dbReference>
<dbReference type="Pfam" id="PF01790">
    <property type="entry name" value="LGT"/>
    <property type="match status" value="1"/>
</dbReference>
<dbReference type="PROSITE" id="PS01311">
    <property type="entry name" value="LGT"/>
    <property type="match status" value="1"/>
</dbReference>
<organism>
    <name type="scientific">Xylella fastidiosa (strain Temecula1 / ATCC 700964)</name>
    <dbReference type="NCBI Taxonomy" id="183190"/>
    <lineage>
        <taxon>Bacteria</taxon>
        <taxon>Pseudomonadati</taxon>
        <taxon>Pseudomonadota</taxon>
        <taxon>Gammaproteobacteria</taxon>
        <taxon>Lysobacterales</taxon>
        <taxon>Lysobacteraceae</taxon>
        <taxon>Xylella</taxon>
    </lineage>
</organism>
<protein>
    <recommendedName>
        <fullName evidence="1">Phosphatidylglycerol--prolipoprotein diacylglyceryl transferase</fullName>
        <ecNumber evidence="1">2.5.1.145</ecNumber>
    </recommendedName>
</protein>
<sequence length="301" mass="33815">MIYLHAIDPIAFSLGPVKVHWYGLMYLAGFGAAWCLGRQRIQAGRLLGVNIDGFSDLLFYAMMGVVLGGRVGYMLFYAFHDFLQEPLLLFRVWEGGMSFHGGLIGVLLAVAWWSRRQRMHMFDVVDFCAPLVPVGLGFGRLGNFIGGELWGKLTHNGWGVIFPRAPLSDVPAGQLAMQDVINFVQIQEHYAAGLLGHYARHPSQLYEAFLEGLVMFIVLWLFSRKPRPRYAVSGLFALLYGVFRFLVEFVRMPDNGVYVAFGWLTRGQILSLPLIVIGLFLFWLSCRSPVLQPVPAPEVAK</sequence>
<reference key="1">
    <citation type="journal article" date="2003" name="J. Bacteriol.">
        <title>Comparative analyses of the complete genome sequences of Pierce's disease and citrus variegated chlorosis strains of Xylella fastidiosa.</title>
        <authorList>
            <person name="Van Sluys M.A."/>
            <person name="de Oliveira M.C."/>
            <person name="Monteiro-Vitorello C.B."/>
            <person name="Miyaki C.Y."/>
            <person name="Furlan L.R."/>
            <person name="Camargo L.E.A."/>
            <person name="da Silva A.C.R."/>
            <person name="Moon D.H."/>
            <person name="Takita M.A."/>
            <person name="Lemos E.G.M."/>
            <person name="Machado M.A."/>
            <person name="Ferro M.I.T."/>
            <person name="da Silva F.R."/>
            <person name="Goldman M.H.S."/>
            <person name="Goldman G.H."/>
            <person name="Lemos M.V.F."/>
            <person name="El-Dorry H."/>
            <person name="Tsai S.M."/>
            <person name="Carrer H."/>
            <person name="Carraro D.M."/>
            <person name="de Oliveira R.C."/>
            <person name="Nunes L.R."/>
            <person name="Siqueira W.J."/>
            <person name="Coutinho L.L."/>
            <person name="Kimura E.T."/>
            <person name="Ferro E.S."/>
            <person name="Harakava R."/>
            <person name="Kuramae E.E."/>
            <person name="Marino C.L."/>
            <person name="Giglioti E."/>
            <person name="Abreu I.L."/>
            <person name="Alves L.M.C."/>
            <person name="do Amaral A.M."/>
            <person name="Baia G.S."/>
            <person name="Blanco S.R."/>
            <person name="Brito M.S."/>
            <person name="Cannavan F.S."/>
            <person name="Celestino A.V."/>
            <person name="da Cunha A.F."/>
            <person name="Fenille R.C."/>
            <person name="Ferro J.A."/>
            <person name="Formighieri E.F."/>
            <person name="Kishi L.T."/>
            <person name="Leoni S.G."/>
            <person name="Oliveira A.R."/>
            <person name="Rosa V.E. Jr."/>
            <person name="Sassaki F.T."/>
            <person name="Sena J.A.D."/>
            <person name="de Souza A.A."/>
            <person name="Truffi D."/>
            <person name="Tsukumo F."/>
            <person name="Yanai G.M."/>
            <person name="Zaros L.G."/>
            <person name="Civerolo E.L."/>
            <person name="Simpson A.J.G."/>
            <person name="Almeida N.F. Jr."/>
            <person name="Setubal J.C."/>
            <person name="Kitajima J.P."/>
        </authorList>
    </citation>
    <scope>NUCLEOTIDE SEQUENCE [LARGE SCALE GENOMIC DNA]</scope>
    <source>
        <strain>Temecula1 / ATCC 700964</strain>
    </source>
</reference>
<evidence type="ECO:0000255" key="1">
    <source>
        <dbReference type="HAMAP-Rule" id="MF_01147"/>
    </source>
</evidence>
<gene>
    <name evidence="1" type="primary">lgt</name>
    <name type="ordered locus">PD_1365</name>
</gene>